<feature type="chain" id="PRO_0000227391" description="UvrABC system protein C">
    <location>
        <begin position="1"/>
        <end position="613"/>
    </location>
</feature>
<feature type="domain" description="GIY-YIG" evidence="1">
    <location>
        <begin position="29"/>
        <end position="107"/>
    </location>
</feature>
<feature type="domain" description="UVR" evidence="1">
    <location>
        <begin position="217"/>
        <end position="252"/>
    </location>
</feature>
<comment type="function">
    <text evidence="1">The UvrABC repair system catalyzes the recognition and processing of DNA lesions. UvrC both incises the 5' and 3' sides of the lesion. The N-terminal half is responsible for the 3' incision and the C-terminal half is responsible for the 5' incision.</text>
</comment>
<comment type="subunit">
    <text evidence="1">Interacts with UvrB in an incision complex.</text>
</comment>
<comment type="subcellular location">
    <subcellularLocation>
        <location evidence="1">Cytoplasm</location>
    </subcellularLocation>
</comment>
<comment type="similarity">
    <text evidence="1">Belongs to the UvrC family.</text>
</comment>
<proteinExistence type="inferred from homology"/>
<keyword id="KW-0963">Cytoplasm</keyword>
<keyword id="KW-0227">DNA damage</keyword>
<keyword id="KW-0228">DNA excision</keyword>
<keyword id="KW-0234">DNA repair</keyword>
<keyword id="KW-0267">Excision nuclease</keyword>
<keyword id="KW-0742">SOS response</keyword>
<dbReference type="EMBL" id="CP000030">
    <property type="protein sequence ID" value="AAV86448.1"/>
    <property type="molecule type" value="Genomic_DNA"/>
</dbReference>
<dbReference type="RefSeq" id="WP_011114245.1">
    <property type="nucleotide sequence ID" value="NZ_AFMU01000053.1"/>
</dbReference>
<dbReference type="SMR" id="Q5PB81"/>
<dbReference type="KEGG" id="ama:AM385"/>
<dbReference type="HOGENOM" id="CLU_014841_3_0_5"/>
<dbReference type="GO" id="GO:0005737">
    <property type="term" value="C:cytoplasm"/>
    <property type="evidence" value="ECO:0007669"/>
    <property type="project" value="UniProtKB-SubCell"/>
</dbReference>
<dbReference type="GO" id="GO:0009380">
    <property type="term" value="C:excinuclease repair complex"/>
    <property type="evidence" value="ECO:0007669"/>
    <property type="project" value="InterPro"/>
</dbReference>
<dbReference type="GO" id="GO:0003677">
    <property type="term" value="F:DNA binding"/>
    <property type="evidence" value="ECO:0007669"/>
    <property type="project" value="UniProtKB-UniRule"/>
</dbReference>
<dbReference type="GO" id="GO:0009381">
    <property type="term" value="F:excinuclease ABC activity"/>
    <property type="evidence" value="ECO:0007669"/>
    <property type="project" value="UniProtKB-UniRule"/>
</dbReference>
<dbReference type="GO" id="GO:0006289">
    <property type="term" value="P:nucleotide-excision repair"/>
    <property type="evidence" value="ECO:0007669"/>
    <property type="project" value="UniProtKB-UniRule"/>
</dbReference>
<dbReference type="GO" id="GO:0009432">
    <property type="term" value="P:SOS response"/>
    <property type="evidence" value="ECO:0007669"/>
    <property type="project" value="UniProtKB-UniRule"/>
</dbReference>
<dbReference type="CDD" id="cd10434">
    <property type="entry name" value="GIY-YIG_UvrC_Cho"/>
    <property type="match status" value="1"/>
</dbReference>
<dbReference type="FunFam" id="3.40.1440.10:FF:000001">
    <property type="entry name" value="UvrABC system protein C"/>
    <property type="match status" value="1"/>
</dbReference>
<dbReference type="Gene3D" id="1.10.150.20">
    <property type="entry name" value="5' to 3' exonuclease, C-terminal subdomain"/>
    <property type="match status" value="1"/>
</dbReference>
<dbReference type="Gene3D" id="3.40.1440.10">
    <property type="entry name" value="GIY-YIG endonuclease"/>
    <property type="match status" value="1"/>
</dbReference>
<dbReference type="Gene3D" id="3.30.420.340">
    <property type="entry name" value="UvrC, RNAse H endonuclease domain"/>
    <property type="match status" value="1"/>
</dbReference>
<dbReference type="HAMAP" id="MF_00203">
    <property type="entry name" value="UvrC"/>
    <property type="match status" value="1"/>
</dbReference>
<dbReference type="InterPro" id="IPR000305">
    <property type="entry name" value="GIY-YIG_endonuc"/>
</dbReference>
<dbReference type="InterPro" id="IPR035901">
    <property type="entry name" value="GIY-YIG_endonuc_sf"/>
</dbReference>
<dbReference type="InterPro" id="IPR047296">
    <property type="entry name" value="GIY-YIG_UvrC_Cho"/>
</dbReference>
<dbReference type="InterPro" id="IPR003583">
    <property type="entry name" value="Hlx-hairpin-Hlx_DNA-bd_motif"/>
</dbReference>
<dbReference type="InterPro" id="IPR010994">
    <property type="entry name" value="RuvA_2-like"/>
</dbReference>
<dbReference type="InterPro" id="IPR001943">
    <property type="entry name" value="UVR_dom"/>
</dbReference>
<dbReference type="InterPro" id="IPR036876">
    <property type="entry name" value="UVR_dom_sf"/>
</dbReference>
<dbReference type="InterPro" id="IPR050066">
    <property type="entry name" value="UvrABC_protein_C"/>
</dbReference>
<dbReference type="InterPro" id="IPR004791">
    <property type="entry name" value="UvrC"/>
</dbReference>
<dbReference type="InterPro" id="IPR001162">
    <property type="entry name" value="UvrC_RNase_H_dom"/>
</dbReference>
<dbReference type="InterPro" id="IPR038476">
    <property type="entry name" value="UvrC_RNase_H_dom_sf"/>
</dbReference>
<dbReference type="NCBIfam" id="TIGR00194">
    <property type="entry name" value="uvrC"/>
    <property type="match status" value="1"/>
</dbReference>
<dbReference type="PANTHER" id="PTHR30562:SF1">
    <property type="entry name" value="UVRABC SYSTEM PROTEIN C"/>
    <property type="match status" value="1"/>
</dbReference>
<dbReference type="PANTHER" id="PTHR30562">
    <property type="entry name" value="UVRC/OXIDOREDUCTASE"/>
    <property type="match status" value="1"/>
</dbReference>
<dbReference type="Pfam" id="PF01541">
    <property type="entry name" value="GIY-YIG"/>
    <property type="match status" value="1"/>
</dbReference>
<dbReference type="Pfam" id="PF14520">
    <property type="entry name" value="HHH_5"/>
    <property type="match status" value="1"/>
</dbReference>
<dbReference type="Pfam" id="PF02151">
    <property type="entry name" value="UVR"/>
    <property type="match status" value="1"/>
</dbReference>
<dbReference type="Pfam" id="PF22920">
    <property type="entry name" value="UvrC_RNaseH"/>
    <property type="match status" value="1"/>
</dbReference>
<dbReference type="Pfam" id="PF08459">
    <property type="entry name" value="UvrC_RNaseH_dom"/>
    <property type="match status" value="1"/>
</dbReference>
<dbReference type="SMART" id="SM00465">
    <property type="entry name" value="GIYc"/>
    <property type="match status" value="1"/>
</dbReference>
<dbReference type="SMART" id="SM00278">
    <property type="entry name" value="HhH1"/>
    <property type="match status" value="2"/>
</dbReference>
<dbReference type="SUPFAM" id="SSF46600">
    <property type="entry name" value="C-terminal UvrC-binding domain of UvrB"/>
    <property type="match status" value="1"/>
</dbReference>
<dbReference type="SUPFAM" id="SSF82771">
    <property type="entry name" value="GIY-YIG endonuclease"/>
    <property type="match status" value="1"/>
</dbReference>
<dbReference type="SUPFAM" id="SSF47781">
    <property type="entry name" value="RuvA domain 2-like"/>
    <property type="match status" value="1"/>
</dbReference>
<dbReference type="PROSITE" id="PS50164">
    <property type="entry name" value="GIY_YIG"/>
    <property type="match status" value="1"/>
</dbReference>
<dbReference type="PROSITE" id="PS50151">
    <property type="entry name" value="UVR"/>
    <property type="match status" value="1"/>
</dbReference>
<dbReference type="PROSITE" id="PS50165">
    <property type="entry name" value="UVRC"/>
    <property type="match status" value="1"/>
</dbReference>
<evidence type="ECO:0000255" key="1">
    <source>
        <dbReference type="HAMAP-Rule" id="MF_00203"/>
    </source>
</evidence>
<accession>Q5PB81</accession>
<organism>
    <name type="scientific">Anaplasma marginale (strain St. Maries)</name>
    <dbReference type="NCBI Taxonomy" id="234826"/>
    <lineage>
        <taxon>Bacteria</taxon>
        <taxon>Pseudomonadati</taxon>
        <taxon>Pseudomonadota</taxon>
        <taxon>Alphaproteobacteria</taxon>
        <taxon>Rickettsiales</taxon>
        <taxon>Anaplasmataceae</taxon>
        <taxon>Anaplasma</taxon>
    </lineage>
</organism>
<gene>
    <name evidence="1" type="primary">uvrC</name>
    <name type="ordered locus">AM385</name>
</gene>
<reference key="1">
    <citation type="journal article" date="2005" name="Proc. Natl. Acad. Sci. U.S.A.">
        <title>Complete genome sequencing of Anaplasma marginale reveals that the surface is skewed to two superfamilies of outer membrane proteins.</title>
        <authorList>
            <person name="Brayton K.A."/>
            <person name="Kappmeyer L.S."/>
            <person name="Herndon D.R."/>
            <person name="Dark M.J."/>
            <person name="Tibbals D.L."/>
            <person name="Palmer G.H."/>
            <person name="McGuire T.C."/>
            <person name="Knowles D.P. Jr."/>
        </authorList>
    </citation>
    <scope>NUCLEOTIDE SEQUENCE [LARGE SCALE GENOMIC DNA]</scope>
    <source>
        <strain>St. Maries</strain>
    </source>
</reference>
<name>UVRC_ANAMM</name>
<protein>
    <recommendedName>
        <fullName evidence="1">UvrABC system protein C</fullName>
        <shortName evidence="1">Protein UvrC</shortName>
    </recommendedName>
    <alternativeName>
        <fullName evidence="1">Excinuclease ABC subunit C</fullName>
    </alternativeName>
</protein>
<sequence length="613" mass="69372">MSVLKKNLAGRLLIARDAVKKALNSIPCDVAGVYKMLGANGLVLYVGKAKDLKKRLRSYYNFNQMSDRILAMVGHITELDVIVTQSEAEALLLEAQLIKTLKPKYNIIMRDDKFYPYILLSKHEYPRIVKYRGRKEAGLGKCYGPFISSLVVKLVISALRKAFQLRSCSDNFFASRDRPCIEYEMRNCSAPCTRKISEEDYAKSVHMAHKVLTGKSKELQRELFDSMRKFSDNLDYESAMVYRDRLQALKSIQECVSFQTEMSCDADFVSIYGRSGTYCLQVISFRGGISYGSQPYFVDDGNYESESDVLGMFMLQVYSDPPGRVYVDCESDYCEVINAALERLLTRKVDILTAKSHEELKFLRLARNSAMEALNRRLRDKALPAELEELAELFGLPNPPERIEVYDNSHISGTHPFGVMVVCGKDGLLRKEYRKFKIQTVLNGDDYSMMHEVLFRRFSEESPSVPDFVLIDGGRGHISSAIQVLGDLGIPFACMAKGSNRNAGEEVFYLPDGRKICLDPDSKLMLYMRKIRDEAHRFAITSHRSSRDRTLSSAVLCDIPGVGSARRRALITYFGSIDGVKRARTDEISKVPGISIKLAQRIYAYLKQGMAQP</sequence>